<name>GLNE_STRM5</name>
<accession>B4SHL3</accession>
<evidence type="ECO:0000255" key="1">
    <source>
        <dbReference type="HAMAP-Rule" id="MF_00802"/>
    </source>
</evidence>
<comment type="function">
    <text evidence="1">Involved in the regulation of glutamine synthetase GlnA, a key enzyme in the process to assimilate ammonia. When cellular nitrogen levels are high, the C-terminal adenylyl transferase (AT) inactivates GlnA by covalent transfer of an adenylyl group from ATP to specific tyrosine residue of GlnA, thus reducing its activity. Conversely, when nitrogen levels are low, the N-terminal adenylyl removase (AR) activates GlnA by removing the adenylyl group by phosphorolysis, increasing its activity. The regulatory region of GlnE binds the signal transduction protein PII (GlnB) which indicates the nitrogen status of the cell.</text>
</comment>
<comment type="catalytic activity">
    <reaction evidence="1">
        <text>[glutamine synthetase]-O(4)-(5'-adenylyl)-L-tyrosine + phosphate = [glutamine synthetase]-L-tyrosine + ADP</text>
        <dbReference type="Rhea" id="RHEA:43716"/>
        <dbReference type="Rhea" id="RHEA-COMP:10660"/>
        <dbReference type="Rhea" id="RHEA-COMP:10661"/>
        <dbReference type="ChEBI" id="CHEBI:43474"/>
        <dbReference type="ChEBI" id="CHEBI:46858"/>
        <dbReference type="ChEBI" id="CHEBI:83624"/>
        <dbReference type="ChEBI" id="CHEBI:456216"/>
        <dbReference type="EC" id="2.7.7.89"/>
    </reaction>
</comment>
<comment type="catalytic activity">
    <reaction evidence="1">
        <text>[glutamine synthetase]-L-tyrosine + ATP = [glutamine synthetase]-O(4)-(5'-adenylyl)-L-tyrosine + diphosphate</text>
        <dbReference type="Rhea" id="RHEA:18589"/>
        <dbReference type="Rhea" id="RHEA-COMP:10660"/>
        <dbReference type="Rhea" id="RHEA-COMP:10661"/>
        <dbReference type="ChEBI" id="CHEBI:30616"/>
        <dbReference type="ChEBI" id="CHEBI:33019"/>
        <dbReference type="ChEBI" id="CHEBI:46858"/>
        <dbReference type="ChEBI" id="CHEBI:83624"/>
        <dbReference type="EC" id="2.7.7.42"/>
    </reaction>
</comment>
<comment type="cofactor">
    <cofactor evidence="1">
        <name>Mg(2+)</name>
        <dbReference type="ChEBI" id="CHEBI:18420"/>
    </cofactor>
</comment>
<comment type="similarity">
    <text evidence="1">Belongs to the GlnE family.</text>
</comment>
<gene>
    <name evidence="1" type="primary">glnE</name>
    <name type="ordered locus">Smal_0351</name>
</gene>
<keyword id="KW-0067">ATP-binding</keyword>
<keyword id="KW-0460">Magnesium</keyword>
<keyword id="KW-0511">Multifunctional enzyme</keyword>
<keyword id="KW-0547">Nucleotide-binding</keyword>
<keyword id="KW-0548">Nucleotidyltransferase</keyword>
<keyword id="KW-0808">Transferase</keyword>
<dbReference type="EC" id="2.7.7.89" evidence="1"/>
<dbReference type="EC" id="2.7.7.42" evidence="1"/>
<dbReference type="EMBL" id="CP001111">
    <property type="protein sequence ID" value="ACF50056.1"/>
    <property type="molecule type" value="Genomic_DNA"/>
</dbReference>
<dbReference type="RefSeq" id="WP_012509865.1">
    <property type="nucleotide sequence ID" value="NC_011071.1"/>
</dbReference>
<dbReference type="SMR" id="B4SHL3"/>
<dbReference type="STRING" id="391008.Smal_0351"/>
<dbReference type="KEGG" id="smt:Smal_0351"/>
<dbReference type="eggNOG" id="COG1391">
    <property type="taxonomic scope" value="Bacteria"/>
</dbReference>
<dbReference type="HOGENOM" id="CLU_006233_0_1_6"/>
<dbReference type="OrthoDB" id="9759366at2"/>
<dbReference type="Proteomes" id="UP000001867">
    <property type="component" value="Chromosome"/>
</dbReference>
<dbReference type="GO" id="GO:0005829">
    <property type="term" value="C:cytosol"/>
    <property type="evidence" value="ECO:0007669"/>
    <property type="project" value="TreeGrafter"/>
</dbReference>
<dbReference type="GO" id="GO:0008882">
    <property type="term" value="F:[glutamate-ammonia-ligase] adenylyltransferase activity"/>
    <property type="evidence" value="ECO:0007669"/>
    <property type="project" value="UniProtKB-UniRule"/>
</dbReference>
<dbReference type="GO" id="GO:0047388">
    <property type="term" value="F:[glutamine synthetase]-adenylyl-L-tyrosine phosphorylase activity"/>
    <property type="evidence" value="ECO:0007669"/>
    <property type="project" value="UniProtKB-EC"/>
</dbReference>
<dbReference type="GO" id="GO:0005524">
    <property type="term" value="F:ATP binding"/>
    <property type="evidence" value="ECO:0007669"/>
    <property type="project" value="UniProtKB-UniRule"/>
</dbReference>
<dbReference type="GO" id="GO:0000287">
    <property type="term" value="F:magnesium ion binding"/>
    <property type="evidence" value="ECO:0007669"/>
    <property type="project" value="UniProtKB-UniRule"/>
</dbReference>
<dbReference type="GO" id="GO:0000820">
    <property type="term" value="P:regulation of glutamine family amino acid metabolic process"/>
    <property type="evidence" value="ECO:0007669"/>
    <property type="project" value="UniProtKB-UniRule"/>
</dbReference>
<dbReference type="CDD" id="cd05401">
    <property type="entry name" value="NT_GlnE_GlnD_like"/>
    <property type="match status" value="2"/>
</dbReference>
<dbReference type="FunFam" id="1.20.120.330:FF:000005">
    <property type="entry name" value="Bifunctional glutamine synthetase adenylyltransferase/adenylyl-removing enzyme"/>
    <property type="match status" value="1"/>
</dbReference>
<dbReference type="FunFam" id="3.30.460.10:FF:000009">
    <property type="entry name" value="Bifunctional glutamine synthetase adenylyltransferase/adenylyl-removing enzyme"/>
    <property type="match status" value="1"/>
</dbReference>
<dbReference type="Gene3D" id="1.20.120.1510">
    <property type="match status" value="1"/>
</dbReference>
<dbReference type="Gene3D" id="3.30.460.10">
    <property type="entry name" value="Beta Polymerase, domain 2"/>
    <property type="match status" value="2"/>
</dbReference>
<dbReference type="Gene3D" id="1.20.120.330">
    <property type="entry name" value="Nucleotidyltransferases domain 2"/>
    <property type="match status" value="2"/>
</dbReference>
<dbReference type="HAMAP" id="MF_00802">
    <property type="entry name" value="GlnE"/>
    <property type="match status" value="1"/>
</dbReference>
<dbReference type="InterPro" id="IPR023057">
    <property type="entry name" value="GlnE"/>
</dbReference>
<dbReference type="InterPro" id="IPR005190">
    <property type="entry name" value="GlnE_rpt_dom"/>
</dbReference>
<dbReference type="InterPro" id="IPR043519">
    <property type="entry name" value="NT_sf"/>
</dbReference>
<dbReference type="InterPro" id="IPR013546">
    <property type="entry name" value="PII_UdlTrfase/GS_AdlTrfase"/>
</dbReference>
<dbReference type="NCBIfam" id="NF008292">
    <property type="entry name" value="PRK11072.1"/>
    <property type="match status" value="1"/>
</dbReference>
<dbReference type="PANTHER" id="PTHR30621:SF0">
    <property type="entry name" value="BIFUNCTIONAL GLUTAMINE SYNTHETASE ADENYLYLTRANSFERASE_ADENYLYL-REMOVING ENZYME"/>
    <property type="match status" value="1"/>
</dbReference>
<dbReference type="PANTHER" id="PTHR30621">
    <property type="entry name" value="GLUTAMINE SYNTHETASE ADENYLYLTRANSFERASE"/>
    <property type="match status" value="1"/>
</dbReference>
<dbReference type="Pfam" id="PF08335">
    <property type="entry name" value="GlnD_UR_UTase"/>
    <property type="match status" value="2"/>
</dbReference>
<dbReference type="Pfam" id="PF03710">
    <property type="entry name" value="GlnE"/>
    <property type="match status" value="2"/>
</dbReference>
<dbReference type="SUPFAM" id="SSF81301">
    <property type="entry name" value="Nucleotidyltransferase"/>
    <property type="match status" value="2"/>
</dbReference>
<dbReference type="SUPFAM" id="SSF81593">
    <property type="entry name" value="Nucleotidyltransferase substrate binding subunit/domain"/>
    <property type="match status" value="2"/>
</dbReference>
<proteinExistence type="inferred from homology"/>
<feature type="chain" id="PRO_1000133924" description="Bifunctional glutamine synthetase adenylyltransferase/adenylyl-removing enzyme">
    <location>
        <begin position="1"/>
        <end position="931"/>
    </location>
</feature>
<feature type="region of interest" description="Adenylyl removase" evidence="1">
    <location>
        <begin position="1"/>
        <end position="434"/>
    </location>
</feature>
<feature type="region of interest" description="Adenylyl transferase" evidence="1">
    <location>
        <begin position="441"/>
        <end position="931"/>
    </location>
</feature>
<protein>
    <recommendedName>
        <fullName evidence="1">Bifunctional glutamine synthetase adenylyltransferase/adenylyl-removing enzyme</fullName>
    </recommendedName>
    <alternativeName>
        <fullName evidence="1">ATP:glutamine synthetase adenylyltransferase</fullName>
    </alternativeName>
    <alternativeName>
        <fullName evidence="1">ATase</fullName>
    </alternativeName>
    <domain>
        <recommendedName>
            <fullName evidence="1">Glutamine synthetase adenylyl-L-tyrosine phosphorylase</fullName>
            <ecNumber evidence="1">2.7.7.89</ecNumber>
        </recommendedName>
        <alternativeName>
            <fullName evidence="1">Adenylyl removase</fullName>
            <shortName evidence="1">AR</shortName>
            <shortName evidence="1">AT-N</shortName>
        </alternativeName>
    </domain>
    <domain>
        <recommendedName>
            <fullName evidence="1">Glutamine synthetase adenylyl transferase</fullName>
            <ecNumber evidence="1">2.7.7.42</ecNumber>
        </recommendedName>
        <alternativeName>
            <fullName evidence="1">Adenylyl transferase</fullName>
            <shortName evidence="1">AT</shortName>
            <shortName evidence="1">AT-C</shortName>
        </alternativeName>
    </domain>
</protein>
<sequence>MTLAPADLPASLQPLVDRALARLAQVLPEPIPANLLPLLTRLAVTSDFALDTLVRQPALLAQLAAPGCPPIPAPVLDPLQPSDWPAQIRRWRTAMSTRLIWRDLTGLDDVAQTLAGATALAEDCLRLALDALQQEFAQRHGVIADEHGIPQQLVVFGLGKLGGGELNFSSDVDLVYAYPQGGESDGPRPLAAEEYFARLGQRLAKLLDETTVDGFSHRVDLRLRPFGSAGRVALSFAAMDQYFQREGRDWERYAWLKARAVAGDIEAGEAWLQTLRPFVYRRYLDFTALDGLREMKAAITAEVARRELHDDIKRGAGGIREIEFLCQALQLIRGGREPALRERRLLVALDALVAAGQIAPEDGSALREAYLFLRRLENRLQMLRDAQTHVLPSDALDRERIAVGLGYPDWEVLRAALAVQQQRVSTEFAALLAPRKGQAAPDALANYWRSLPEGSNAPLLAEAGFLDANGADQSLRDFAQGTGVKSLSDAARARLDRVLPALLHAATRSPQPDAALKRVLGLLQAVLRRTSYLALLDEQPSALARLVDVLARSALLAERLAAYPLLLDELLDVRVSGPMPDAAGMLAECQQVLAVEDPESALRWLNETRLALSFRMAMATLDGRQGAVDSTRQLAELAQAVVVTVLAMAEADMHAAHGEIPGGRFAIIGYGSLGGLELGFGSDLDLVFLHDNPAGVDASDGARPLEPGRWYARLAQKVMALLGAVTAAGRLYDIDVRLRPDGGKGSLVSSLASYTEYQRERAWTWEHQALVRARGVAGDASLLADFEQVRAQTLGRERDTGVLYADVLKMRGRMRTELDRSDAARLDLKQGAGGVVDLEFLLQTGVLARSARHAALLQPRDTPSLIDALAVAEFLPEDTAQALHGAHATLLDVGLACTLDRRPRLAPTTPAIEEACAAITAACIAAELPFA</sequence>
<organism>
    <name type="scientific">Stenotrophomonas maltophilia (strain R551-3)</name>
    <dbReference type="NCBI Taxonomy" id="391008"/>
    <lineage>
        <taxon>Bacteria</taxon>
        <taxon>Pseudomonadati</taxon>
        <taxon>Pseudomonadota</taxon>
        <taxon>Gammaproteobacteria</taxon>
        <taxon>Lysobacterales</taxon>
        <taxon>Lysobacteraceae</taxon>
        <taxon>Stenotrophomonas</taxon>
        <taxon>Stenotrophomonas maltophilia group</taxon>
    </lineage>
</organism>
<reference key="1">
    <citation type="submission" date="2008-06" db="EMBL/GenBank/DDBJ databases">
        <title>Complete sequence of Stenotrophomonas maltophilia R551-3.</title>
        <authorList>
            <consortium name="US DOE Joint Genome Institute"/>
            <person name="Lucas S."/>
            <person name="Copeland A."/>
            <person name="Lapidus A."/>
            <person name="Glavina del Rio T."/>
            <person name="Dalin E."/>
            <person name="Tice H."/>
            <person name="Pitluck S."/>
            <person name="Chain P."/>
            <person name="Malfatti S."/>
            <person name="Shin M."/>
            <person name="Vergez L."/>
            <person name="Lang D."/>
            <person name="Schmutz J."/>
            <person name="Larimer F."/>
            <person name="Land M."/>
            <person name="Hauser L."/>
            <person name="Kyrpides N."/>
            <person name="Mikhailova N."/>
            <person name="Taghavi S."/>
            <person name="Monchy S."/>
            <person name="Newman L."/>
            <person name="Vangronsveld J."/>
            <person name="van der Lelie D."/>
            <person name="Richardson P."/>
        </authorList>
    </citation>
    <scope>NUCLEOTIDE SEQUENCE [LARGE SCALE GENOMIC DNA]</scope>
    <source>
        <strain>R551-3</strain>
    </source>
</reference>